<sequence>MEAEGLGWLLVPLHQLVSWVAAGAMVFGGVVPYIPQYRDIRRTQNADGFSTHVCLVLLVANILRILFWFGRHFESPLLWQSIVMILTMLLMLKLCTEVRVANELNIKRRSFAATDSKDEELRVPPRRPYLDFDPHHFWHWSSFSDYVQCVLAFTGVAGYITYLSIDSALFVETLGFLAVLTEAMLGVPQLYRNYCHRSTEGMSLKMVLMWTSGDTFKTAYFLLNGAPLQFSVCGLLQVMVDLVILGQAYAFAHHPQKPAAHAVHPASTKAL</sequence>
<dbReference type="EMBL" id="AK009256">
    <property type="protein sequence ID" value="BAB26173.1"/>
    <property type="molecule type" value="mRNA"/>
</dbReference>
<dbReference type="EMBL" id="AK017854">
    <property type="protein sequence ID" value="BAB30976.1"/>
    <property type="molecule type" value="mRNA"/>
</dbReference>
<dbReference type="EMBL" id="AK018759">
    <property type="protein sequence ID" value="BAB31391.1"/>
    <property type="molecule type" value="mRNA"/>
</dbReference>
<dbReference type="EMBL" id="AK019858">
    <property type="protein sequence ID" value="BAB31886.1"/>
    <property type="status" value="ALT_FRAME"/>
    <property type="molecule type" value="mRNA"/>
</dbReference>
<dbReference type="EMBL" id="AK047446">
    <property type="protein sequence ID" value="BAC33061.1"/>
    <property type="molecule type" value="mRNA"/>
</dbReference>
<dbReference type="EMBL" id="AK153023">
    <property type="protein sequence ID" value="BAE31657.1"/>
    <property type="molecule type" value="mRNA"/>
</dbReference>
<dbReference type="EMBL" id="AK153176">
    <property type="protein sequence ID" value="BAE31779.1"/>
    <property type="molecule type" value="mRNA"/>
</dbReference>
<dbReference type="EMBL" id="BC008231">
    <property type="protein sequence ID" value="AAH08231.1"/>
    <property type="molecule type" value="mRNA"/>
</dbReference>
<dbReference type="EMBL" id="BC029179">
    <property type="protein sequence ID" value="AAH29179.1"/>
    <property type="molecule type" value="mRNA"/>
</dbReference>
<dbReference type="EMBL" id="BC043686">
    <property type="protein sequence ID" value="AAH43686.1"/>
    <property type="molecule type" value="mRNA"/>
</dbReference>
<dbReference type="CCDS" id="CCDS29367.1">
    <molecule id="Q80XM9-1"/>
</dbReference>
<dbReference type="CCDS" id="CCDS50334.1">
    <molecule id="Q80XM9-2"/>
</dbReference>
<dbReference type="CCDS" id="CCDS89285.1">
    <molecule id="Q80XM9-4"/>
</dbReference>
<dbReference type="RefSeq" id="NP_001157892.1">
    <molecule id="Q80XM9-2"/>
    <property type="nucleotide sequence ID" value="NM_001164420.1"/>
</dbReference>
<dbReference type="RefSeq" id="NP_001157893.1">
    <molecule id="Q80XM9-2"/>
    <property type="nucleotide sequence ID" value="NM_001164421.1"/>
</dbReference>
<dbReference type="RefSeq" id="NP_001157894.1">
    <molecule id="Q80XM9-2"/>
    <property type="nucleotide sequence ID" value="NM_001164422.1"/>
</dbReference>
<dbReference type="RefSeq" id="NP_001157895.1">
    <molecule id="Q80XM9-4"/>
    <property type="nucleotide sequence ID" value="NM_001164423.1"/>
</dbReference>
<dbReference type="RefSeq" id="NP_001157896.1">
    <molecule id="Q80XM9-4"/>
    <property type="nucleotide sequence ID" value="NM_001164424.1"/>
</dbReference>
<dbReference type="RefSeq" id="NP_080137.2">
    <molecule id="Q80XM9-1"/>
    <property type="nucleotide sequence ID" value="NM_025861.3"/>
</dbReference>
<dbReference type="RefSeq" id="XP_006526582.1">
    <molecule id="Q80XM9-1"/>
    <property type="nucleotide sequence ID" value="XM_006526519.2"/>
</dbReference>
<dbReference type="RefSeq" id="XP_006526583.1">
    <molecule id="Q80XM9-1"/>
    <property type="nucleotide sequence ID" value="XM_006526520.5"/>
</dbReference>
<dbReference type="SMR" id="Q80XM9"/>
<dbReference type="FunCoup" id="Q80XM9">
    <property type="interactions" value="650"/>
</dbReference>
<dbReference type="STRING" id="10090.ENSMUSP00000119083"/>
<dbReference type="iPTMnet" id="Q80XM9"/>
<dbReference type="PhosphoSitePlus" id="Q80XM9"/>
<dbReference type="jPOST" id="Q80XM9"/>
<dbReference type="PaxDb" id="10090-ENSMUSP00000121890"/>
<dbReference type="ProteomicsDB" id="291733">
    <molecule id="Q80XM9-1"/>
</dbReference>
<dbReference type="ProteomicsDB" id="291734">
    <molecule id="Q80XM9-2"/>
</dbReference>
<dbReference type="ProteomicsDB" id="291735">
    <molecule id="Q80XM9-3"/>
</dbReference>
<dbReference type="ProteomicsDB" id="291736">
    <molecule id="Q80XM9-4"/>
</dbReference>
<dbReference type="Pumba" id="Q80XM9"/>
<dbReference type="Antibodypedia" id="23501">
    <property type="antibodies" value="76 antibodies from 15 providers"/>
</dbReference>
<dbReference type="DNASU" id="66943"/>
<dbReference type="Ensembl" id="ENSMUST00000070135.8">
    <molecule id="Q80XM9-2"/>
    <property type="protein sequence ID" value="ENSMUSP00000069986.8"/>
    <property type="gene ID" value="ENSMUSG00000034006.18"/>
</dbReference>
<dbReference type="Ensembl" id="ENSMUST00000091798.10">
    <molecule id="Q80XM9-1"/>
    <property type="protein sequence ID" value="ENSMUSP00000089402.4"/>
    <property type="gene ID" value="ENSMUSG00000034006.18"/>
</dbReference>
<dbReference type="Ensembl" id="ENSMUST00000123750.8">
    <molecule id="Q80XM9-2"/>
    <property type="protein sequence ID" value="ENSMUSP00000121890.2"/>
    <property type="gene ID" value="ENSMUSG00000034006.18"/>
</dbReference>
<dbReference type="Ensembl" id="ENSMUST00000129043.8">
    <molecule id="Q80XM9-2"/>
    <property type="protein sequence ID" value="ENSMUSP00000118670.2"/>
    <property type="gene ID" value="ENSMUSG00000034006.18"/>
</dbReference>
<dbReference type="Ensembl" id="ENSMUST00000131780.8">
    <molecule id="Q80XM9-1"/>
    <property type="protein sequence ID" value="ENSMUSP00000117166.2"/>
    <property type="gene ID" value="ENSMUSG00000034006.18"/>
</dbReference>
<dbReference type="Ensembl" id="ENSMUST00000134545.3">
    <molecule id="Q80XM9-4"/>
    <property type="protein sequence ID" value="ENSMUSP00000157740.2"/>
    <property type="gene ID" value="ENSMUSG00000034006.18"/>
</dbReference>
<dbReference type="Ensembl" id="ENSMUST00000140594.8">
    <molecule id="Q80XM9-1"/>
    <property type="protein sequence ID" value="ENSMUSP00000119083.2"/>
    <property type="gene ID" value="ENSMUSG00000034006.18"/>
</dbReference>
<dbReference type="Ensembl" id="ENSMUST00000151677.9">
    <molecule id="Q80XM9-4"/>
    <property type="protein sequence ID" value="ENSMUSP00000157569.2"/>
    <property type="gene ID" value="ENSMUSG00000034006.18"/>
</dbReference>
<dbReference type="GeneID" id="66943"/>
<dbReference type="KEGG" id="mmu:66943"/>
<dbReference type="UCSC" id="uc008fsu.2">
    <molecule id="Q80XM9-1"/>
    <property type="organism name" value="mouse"/>
</dbReference>
<dbReference type="UCSC" id="uc008fsv.2">
    <molecule id="Q80XM9-2"/>
    <property type="organism name" value="mouse"/>
</dbReference>
<dbReference type="UCSC" id="uc008fsw.2">
    <molecule id="Q80XM9-4"/>
    <property type="organism name" value="mouse"/>
</dbReference>
<dbReference type="AGR" id="MGI:1914193"/>
<dbReference type="CTD" id="80148"/>
<dbReference type="MGI" id="MGI:1914193">
    <property type="gene designation" value="Slc66a2"/>
</dbReference>
<dbReference type="VEuPathDB" id="HostDB:ENSMUSG00000034006"/>
<dbReference type="eggNOG" id="KOG2913">
    <property type="taxonomic scope" value="Eukaryota"/>
</dbReference>
<dbReference type="GeneTree" id="ENSGT00390000002381"/>
<dbReference type="HOGENOM" id="CLU_049047_2_0_1"/>
<dbReference type="InParanoid" id="Q80XM9"/>
<dbReference type="OMA" id="FKMWFFF"/>
<dbReference type="OrthoDB" id="292213at2759"/>
<dbReference type="PhylomeDB" id="Q80XM9"/>
<dbReference type="TreeFam" id="TF313072"/>
<dbReference type="BioGRID-ORCS" id="66943">
    <property type="hits" value="1 hit in 76 CRISPR screens"/>
</dbReference>
<dbReference type="PRO" id="PR:Q80XM9"/>
<dbReference type="Proteomes" id="UP000000589">
    <property type="component" value="Chromosome 18"/>
</dbReference>
<dbReference type="RNAct" id="Q80XM9">
    <property type="molecule type" value="protein"/>
</dbReference>
<dbReference type="Bgee" id="ENSMUSG00000034006">
    <property type="expression patterns" value="Expressed in granulocyte and 255 other cell types or tissues"/>
</dbReference>
<dbReference type="ExpressionAtlas" id="Q80XM9">
    <property type="expression patterns" value="baseline and differential"/>
</dbReference>
<dbReference type="GO" id="GO:0016020">
    <property type="term" value="C:membrane"/>
    <property type="evidence" value="ECO:0007669"/>
    <property type="project" value="UniProtKB-SubCell"/>
</dbReference>
<dbReference type="FunFam" id="1.20.1280.290:FF:000005">
    <property type="entry name" value="PQ-loop repeat-containing protein 1"/>
    <property type="match status" value="1"/>
</dbReference>
<dbReference type="FunFam" id="1.20.1280.290:FF:000008">
    <property type="entry name" value="PQ-loop repeat-containing protein 1"/>
    <property type="match status" value="1"/>
</dbReference>
<dbReference type="Gene3D" id="1.20.1280.290">
    <property type="match status" value="2"/>
</dbReference>
<dbReference type="InterPro" id="IPR006603">
    <property type="entry name" value="PQ-loop_rpt"/>
</dbReference>
<dbReference type="InterPro" id="IPR052241">
    <property type="entry name" value="SLC66/Scramblase_ANY1"/>
</dbReference>
<dbReference type="PANTHER" id="PTHR14856">
    <property type="entry name" value="PQ-LOOP REPEAT-CONTAINING PROTEIN 1-LIKE PROTEIN"/>
    <property type="match status" value="1"/>
</dbReference>
<dbReference type="PANTHER" id="PTHR14856:SF10">
    <property type="entry name" value="SOLUTE CARRIER FAMILY 66 MEMBER 2"/>
    <property type="match status" value="1"/>
</dbReference>
<dbReference type="Pfam" id="PF04193">
    <property type="entry name" value="PQ-loop"/>
    <property type="match status" value="2"/>
</dbReference>
<dbReference type="SMART" id="SM00679">
    <property type="entry name" value="CTNS"/>
    <property type="match status" value="2"/>
</dbReference>
<keyword id="KW-0025">Alternative splicing</keyword>
<keyword id="KW-0472">Membrane</keyword>
<keyword id="KW-0597">Phosphoprotein</keyword>
<keyword id="KW-1185">Reference proteome</keyword>
<keyword id="KW-0677">Repeat</keyword>
<keyword id="KW-0812">Transmembrane</keyword>
<keyword id="KW-1133">Transmembrane helix</keyword>
<accession>Q80XM9</accession>
<accession>Q3U6E6</accession>
<accession>Q9CYA7</accession>
<accession>Q9D2D3</accession>
<accession>Q9D2V1</accession>
<accession>Q9D7G6</accession>
<feature type="chain" id="PRO_0000282431" description="Solute carrier family 66 member 2">
    <location>
        <begin position="1"/>
        <end position="271"/>
    </location>
</feature>
<feature type="transmembrane region" description="Helical" evidence="1">
    <location>
        <begin position="7"/>
        <end position="27"/>
    </location>
</feature>
<feature type="transmembrane region" description="Helical" evidence="1">
    <location>
        <begin position="49"/>
        <end position="69"/>
    </location>
</feature>
<feature type="transmembrane region" description="Helical" evidence="1">
    <location>
        <begin position="72"/>
        <end position="92"/>
    </location>
</feature>
<feature type="transmembrane region" description="Helical" evidence="1">
    <location>
        <begin position="145"/>
        <end position="165"/>
    </location>
</feature>
<feature type="transmembrane region" description="Helical" evidence="1">
    <location>
        <begin position="168"/>
        <end position="188"/>
    </location>
</feature>
<feature type="transmembrane region" description="Helical" evidence="1">
    <location>
        <begin position="232"/>
        <end position="252"/>
    </location>
</feature>
<feature type="domain" description="PQ-loop 1">
    <location>
        <begin position="14"/>
        <end position="80"/>
    </location>
</feature>
<feature type="domain" description="PQ-loop 2">
    <location>
        <begin position="178"/>
        <end position="233"/>
    </location>
</feature>
<feature type="modified residue" description="Phosphoserine" evidence="4">
    <location>
        <position position="110"/>
    </location>
</feature>
<feature type="splice variant" id="VSP_024146" description="In isoform 2 and isoform 3." evidence="2">
    <location>
        <begin position="113"/>
        <end position="130"/>
    </location>
</feature>
<feature type="splice variant" id="VSP_024147" description="In isoform 4." evidence="2">
    <original>DFDP</original>
    <variation>GMYY</variation>
    <location>
        <begin position="131"/>
        <end position="134"/>
    </location>
</feature>
<feature type="splice variant" id="VSP_024148" description="In isoform 4." evidence="2">
    <location>
        <begin position="135"/>
        <end position="271"/>
    </location>
</feature>
<feature type="splice variant" id="VSP_024149" description="In isoform 3." evidence="2">
    <location>
        <begin position="143"/>
        <end position="271"/>
    </location>
</feature>
<feature type="sequence conflict" description="In Ref. 1; BAB31391." evidence="3" ref="1">
    <original>Y</original>
    <variation>F</variation>
    <location>
        <position position="33"/>
    </location>
</feature>
<feature type="sequence conflict" description="In Ref. 1; BAB31391." evidence="3" ref="1">
    <original>R</original>
    <variation>T</variation>
    <location>
        <position position="42"/>
    </location>
</feature>
<feature type="sequence conflict" description="In Ref. 1; BAB31391." evidence="3" ref="1">
    <original>A</original>
    <variation>P</variation>
    <location>
        <position position="46"/>
    </location>
</feature>
<feature type="sequence conflict" description="In Ref. 1; BAB31886." evidence="3" ref="1">
    <original>R</original>
    <variation>P</variation>
    <location>
        <position position="108"/>
    </location>
</feature>
<feature type="sequence conflict" description="In Ref. 1; BAE31779." evidence="3" ref="1">
    <original>D</original>
    <variation>G</variation>
    <location>
        <position position="241"/>
    </location>
</feature>
<comment type="subcellular location">
    <subcellularLocation>
        <location evidence="3">Membrane</location>
        <topology evidence="3">Multi-pass membrane protein</topology>
    </subcellularLocation>
</comment>
<comment type="alternative products">
    <event type="alternative splicing"/>
    <isoform>
        <id>Q80XM9-1</id>
        <name>1</name>
        <sequence type="displayed"/>
    </isoform>
    <isoform>
        <id>Q80XM9-2</id>
        <name>2</name>
        <sequence type="described" ref="VSP_024146"/>
    </isoform>
    <isoform>
        <id>Q80XM9-3</id>
        <name>3</name>
        <sequence type="described" ref="VSP_024146 VSP_024149"/>
    </isoform>
    <isoform>
        <id>Q80XM9-4</id>
        <name>4</name>
        <sequence type="described" ref="VSP_024147 VSP_024148"/>
    </isoform>
</comment>
<comment type="sequence caution" evidence="3">
    <conflict type="frameshift">
        <sequence resource="EMBL-CDS" id="BAB31886"/>
    </conflict>
</comment>
<reference key="1">
    <citation type="journal article" date="2005" name="Science">
        <title>The transcriptional landscape of the mammalian genome.</title>
        <authorList>
            <person name="Carninci P."/>
            <person name="Kasukawa T."/>
            <person name="Katayama S."/>
            <person name="Gough J."/>
            <person name="Frith M.C."/>
            <person name="Maeda N."/>
            <person name="Oyama R."/>
            <person name="Ravasi T."/>
            <person name="Lenhard B."/>
            <person name="Wells C."/>
            <person name="Kodzius R."/>
            <person name="Shimokawa K."/>
            <person name="Bajic V.B."/>
            <person name="Brenner S.E."/>
            <person name="Batalov S."/>
            <person name="Forrest A.R."/>
            <person name="Zavolan M."/>
            <person name="Davis M.J."/>
            <person name="Wilming L.G."/>
            <person name="Aidinis V."/>
            <person name="Allen J.E."/>
            <person name="Ambesi-Impiombato A."/>
            <person name="Apweiler R."/>
            <person name="Aturaliya R.N."/>
            <person name="Bailey T.L."/>
            <person name="Bansal M."/>
            <person name="Baxter L."/>
            <person name="Beisel K.W."/>
            <person name="Bersano T."/>
            <person name="Bono H."/>
            <person name="Chalk A.M."/>
            <person name="Chiu K.P."/>
            <person name="Choudhary V."/>
            <person name="Christoffels A."/>
            <person name="Clutterbuck D.R."/>
            <person name="Crowe M.L."/>
            <person name="Dalla E."/>
            <person name="Dalrymple B.P."/>
            <person name="de Bono B."/>
            <person name="Della Gatta G."/>
            <person name="di Bernardo D."/>
            <person name="Down T."/>
            <person name="Engstrom P."/>
            <person name="Fagiolini M."/>
            <person name="Faulkner G."/>
            <person name="Fletcher C.F."/>
            <person name="Fukushima T."/>
            <person name="Furuno M."/>
            <person name="Futaki S."/>
            <person name="Gariboldi M."/>
            <person name="Georgii-Hemming P."/>
            <person name="Gingeras T.R."/>
            <person name="Gojobori T."/>
            <person name="Green R.E."/>
            <person name="Gustincich S."/>
            <person name="Harbers M."/>
            <person name="Hayashi Y."/>
            <person name="Hensch T.K."/>
            <person name="Hirokawa N."/>
            <person name="Hill D."/>
            <person name="Huminiecki L."/>
            <person name="Iacono M."/>
            <person name="Ikeo K."/>
            <person name="Iwama A."/>
            <person name="Ishikawa T."/>
            <person name="Jakt M."/>
            <person name="Kanapin A."/>
            <person name="Katoh M."/>
            <person name="Kawasawa Y."/>
            <person name="Kelso J."/>
            <person name="Kitamura H."/>
            <person name="Kitano H."/>
            <person name="Kollias G."/>
            <person name="Krishnan S.P."/>
            <person name="Kruger A."/>
            <person name="Kummerfeld S.K."/>
            <person name="Kurochkin I.V."/>
            <person name="Lareau L.F."/>
            <person name="Lazarevic D."/>
            <person name="Lipovich L."/>
            <person name="Liu J."/>
            <person name="Liuni S."/>
            <person name="McWilliam S."/>
            <person name="Madan Babu M."/>
            <person name="Madera M."/>
            <person name="Marchionni L."/>
            <person name="Matsuda H."/>
            <person name="Matsuzawa S."/>
            <person name="Miki H."/>
            <person name="Mignone F."/>
            <person name="Miyake S."/>
            <person name="Morris K."/>
            <person name="Mottagui-Tabar S."/>
            <person name="Mulder N."/>
            <person name="Nakano N."/>
            <person name="Nakauchi H."/>
            <person name="Ng P."/>
            <person name="Nilsson R."/>
            <person name="Nishiguchi S."/>
            <person name="Nishikawa S."/>
            <person name="Nori F."/>
            <person name="Ohara O."/>
            <person name="Okazaki Y."/>
            <person name="Orlando V."/>
            <person name="Pang K.C."/>
            <person name="Pavan W.J."/>
            <person name="Pavesi G."/>
            <person name="Pesole G."/>
            <person name="Petrovsky N."/>
            <person name="Piazza S."/>
            <person name="Reed J."/>
            <person name="Reid J.F."/>
            <person name="Ring B.Z."/>
            <person name="Ringwald M."/>
            <person name="Rost B."/>
            <person name="Ruan Y."/>
            <person name="Salzberg S.L."/>
            <person name="Sandelin A."/>
            <person name="Schneider C."/>
            <person name="Schoenbach C."/>
            <person name="Sekiguchi K."/>
            <person name="Semple C.A."/>
            <person name="Seno S."/>
            <person name="Sessa L."/>
            <person name="Sheng Y."/>
            <person name="Shibata Y."/>
            <person name="Shimada H."/>
            <person name="Shimada K."/>
            <person name="Silva D."/>
            <person name="Sinclair B."/>
            <person name="Sperling S."/>
            <person name="Stupka E."/>
            <person name="Sugiura K."/>
            <person name="Sultana R."/>
            <person name="Takenaka Y."/>
            <person name="Taki K."/>
            <person name="Tammoja K."/>
            <person name="Tan S.L."/>
            <person name="Tang S."/>
            <person name="Taylor M.S."/>
            <person name="Tegner J."/>
            <person name="Teichmann S.A."/>
            <person name="Ueda H.R."/>
            <person name="van Nimwegen E."/>
            <person name="Verardo R."/>
            <person name="Wei C.L."/>
            <person name="Yagi K."/>
            <person name="Yamanishi H."/>
            <person name="Zabarovsky E."/>
            <person name="Zhu S."/>
            <person name="Zimmer A."/>
            <person name="Hide W."/>
            <person name="Bult C."/>
            <person name="Grimmond S.M."/>
            <person name="Teasdale R.D."/>
            <person name="Liu E.T."/>
            <person name="Brusic V."/>
            <person name="Quackenbush J."/>
            <person name="Wahlestedt C."/>
            <person name="Mattick J.S."/>
            <person name="Hume D.A."/>
            <person name="Kai C."/>
            <person name="Sasaki D."/>
            <person name="Tomaru Y."/>
            <person name="Fukuda S."/>
            <person name="Kanamori-Katayama M."/>
            <person name="Suzuki M."/>
            <person name="Aoki J."/>
            <person name="Arakawa T."/>
            <person name="Iida J."/>
            <person name="Imamura K."/>
            <person name="Itoh M."/>
            <person name="Kato T."/>
            <person name="Kawaji H."/>
            <person name="Kawagashira N."/>
            <person name="Kawashima T."/>
            <person name="Kojima M."/>
            <person name="Kondo S."/>
            <person name="Konno H."/>
            <person name="Nakano K."/>
            <person name="Ninomiya N."/>
            <person name="Nishio T."/>
            <person name="Okada M."/>
            <person name="Plessy C."/>
            <person name="Shibata K."/>
            <person name="Shiraki T."/>
            <person name="Suzuki S."/>
            <person name="Tagami M."/>
            <person name="Waki K."/>
            <person name="Watahiki A."/>
            <person name="Okamura-Oho Y."/>
            <person name="Suzuki H."/>
            <person name="Kawai J."/>
            <person name="Hayashizaki Y."/>
        </authorList>
    </citation>
    <scope>NUCLEOTIDE SEQUENCE [LARGE SCALE MRNA] (ISOFORMS 1; 2; 3 AND 4)</scope>
    <source>
        <strain>C57BL/6J</strain>
        <tissue>Bone marrow</tissue>
        <tissue>Cerebellum</tissue>
        <tissue>Embryo</tissue>
        <tissue>Liver</tissue>
        <tissue>Testis</tissue>
        <tissue>Tongue</tissue>
    </source>
</reference>
<reference key="2">
    <citation type="journal article" date="2004" name="Genome Res.">
        <title>The status, quality, and expansion of the NIH full-length cDNA project: the Mammalian Gene Collection (MGC).</title>
        <authorList>
            <consortium name="The MGC Project Team"/>
        </authorList>
    </citation>
    <scope>NUCLEOTIDE SEQUENCE [LARGE SCALE MRNA] (ISOFORM 1)</scope>
    <source>
        <strain>FVB/N</strain>
        <tissue>Liver</tissue>
        <tissue>Mammary tumor</tissue>
    </source>
</reference>
<reference key="3">
    <citation type="journal article" date="2010" name="Cell">
        <title>A tissue-specific atlas of mouse protein phosphorylation and expression.</title>
        <authorList>
            <person name="Huttlin E.L."/>
            <person name="Jedrychowski M.P."/>
            <person name="Elias J.E."/>
            <person name="Goswami T."/>
            <person name="Rad R."/>
            <person name="Beausoleil S.A."/>
            <person name="Villen J."/>
            <person name="Haas W."/>
            <person name="Sowa M.E."/>
            <person name="Gygi S.P."/>
        </authorList>
    </citation>
    <scope>PHOSPHORYLATION [LARGE SCALE ANALYSIS] AT SER-110</scope>
    <scope>IDENTIFICATION BY MASS SPECTROMETRY [LARGE SCALE ANALYSIS]</scope>
    <source>
        <tissue>Kidney</tissue>
        <tissue>Liver</tissue>
    </source>
</reference>
<protein>
    <recommendedName>
        <fullName evidence="3">Solute carrier family 66 member 2</fullName>
    </recommendedName>
    <alternativeName>
        <fullName>PQ-loop repeat-containing protein 1</fullName>
    </alternativeName>
</protein>
<organism>
    <name type="scientific">Mus musculus</name>
    <name type="common">Mouse</name>
    <dbReference type="NCBI Taxonomy" id="10090"/>
    <lineage>
        <taxon>Eukaryota</taxon>
        <taxon>Metazoa</taxon>
        <taxon>Chordata</taxon>
        <taxon>Craniata</taxon>
        <taxon>Vertebrata</taxon>
        <taxon>Euteleostomi</taxon>
        <taxon>Mammalia</taxon>
        <taxon>Eutheria</taxon>
        <taxon>Euarchontoglires</taxon>
        <taxon>Glires</taxon>
        <taxon>Rodentia</taxon>
        <taxon>Myomorpha</taxon>
        <taxon>Muroidea</taxon>
        <taxon>Muridae</taxon>
        <taxon>Murinae</taxon>
        <taxon>Mus</taxon>
        <taxon>Mus</taxon>
    </lineage>
</organism>
<evidence type="ECO:0000255" key="1"/>
<evidence type="ECO:0000303" key="2">
    <source>
    </source>
</evidence>
<evidence type="ECO:0000305" key="3"/>
<evidence type="ECO:0007744" key="4">
    <source>
    </source>
</evidence>
<name>S66A2_MOUSE</name>
<proteinExistence type="evidence at protein level"/>
<gene>
    <name type="primary">Slc66a2</name>
    <name type="synonym">Pqlc1</name>
</gene>